<protein>
    <recommendedName>
        <fullName evidence="1">Ribosome-binding factor A</fullName>
    </recommendedName>
</protein>
<proteinExistence type="inferred from homology"/>
<reference key="1">
    <citation type="submission" date="2006-10" db="EMBL/GenBank/DDBJ databases">
        <authorList>
            <person name="Fleischmann R.D."/>
            <person name="Dodson R.J."/>
            <person name="Haft D.H."/>
            <person name="Merkel J.S."/>
            <person name="Nelson W.C."/>
            <person name="Fraser C.M."/>
        </authorList>
    </citation>
    <scope>NUCLEOTIDE SEQUENCE [LARGE SCALE GENOMIC DNA]</scope>
    <source>
        <strain>104</strain>
    </source>
</reference>
<sequence>MPDPARARRLAKRINTIVASAIEFEIKDPGLDGVTIVDTKVTADLHDATVFYTVMGRTLDDEPDYGAAAAALERAKGALRTMVGAGTGVRFTPTLTFTRDTTSDSVARMDELLARARAADADLARVRSGAKPAGEADPYRESGSGVEPGRDGSIGDDDQPEY</sequence>
<accession>A0QIY1</accession>
<organism>
    <name type="scientific">Mycobacterium avium (strain 104)</name>
    <dbReference type="NCBI Taxonomy" id="243243"/>
    <lineage>
        <taxon>Bacteria</taxon>
        <taxon>Bacillati</taxon>
        <taxon>Actinomycetota</taxon>
        <taxon>Actinomycetes</taxon>
        <taxon>Mycobacteriales</taxon>
        <taxon>Mycobacteriaceae</taxon>
        <taxon>Mycobacterium</taxon>
        <taxon>Mycobacterium avium complex (MAC)</taxon>
    </lineage>
</organism>
<comment type="function">
    <text evidence="1">One of several proteins that assist in the late maturation steps of the functional core of the 30S ribosomal subunit. Associates with free 30S ribosomal subunits (but not with 30S subunits that are part of 70S ribosomes or polysomes). Required for efficient processing of 16S rRNA. May interact with the 5'-terminal helix region of 16S rRNA.</text>
</comment>
<comment type="subunit">
    <text evidence="1">Monomer. Binds 30S ribosomal subunits, but not 50S ribosomal subunits or 70S ribosomes.</text>
</comment>
<comment type="subcellular location">
    <subcellularLocation>
        <location evidence="1">Cytoplasm</location>
    </subcellularLocation>
</comment>
<comment type="similarity">
    <text evidence="1">Belongs to the RbfA family.</text>
</comment>
<name>RBFA_MYCA1</name>
<feature type="chain" id="PRO_1000000141" description="Ribosome-binding factor A">
    <location>
        <begin position="1"/>
        <end position="162"/>
    </location>
</feature>
<feature type="region of interest" description="Disordered" evidence="2">
    <location>
        <begin position="124"/>
        <end position="162"/>
    </location>
</feature>
<keyword id="KW-0963">Cytoplasm</keyword>
<keyword id="KW-0690">Ribosome biogenesis</keyword>
<evidence type="ECO:0000255" key="1">
    <source>
        <dbReference type="HAMAP-Rule" id="MF_00003"/>
    </source>
</evidence>
<evidence type="ECO:0000256" key="2">
    <source>
        <dbReference type="SAM" id="MobiDB-lite"/>
    </source>
</evidence>
<gene>
    <name evidence="1" type="primary">rbfA</name>
    <name type="ordered locus">MAV_3692</name>
</gene>
<dbReference type="EMBL" id="CP000479">
    <property type="protein sequence ID" value="ABK66722.1"/>
    <property type="molecule type" value="Genomic_DNA"/>
</dbReference>
<dbReference type="RefSeq" id="WP_003875146.1">
    <property type="nucleotide sequence ID" value="NC_008595.1"/>
</dbReference>
<dbReference type="SMR" id="A0QIY1"/>
<dbReference type="GeneID" id="75271085"/>
<dbReference type="KEGG" id="mav:MAV_3692"/>
<dbReference type="HOGENOM" id="CLU_089475_0_0_11"/>
<dbReference type="Proteomes" id="UP000001574">
    <property type="component" value="Chromosome"/>
</dbReference>
<dbReference type="GO" id="GO:0005829">
    <property type="term" value="C:cytosol"/>
    <property type="evidence" value="ECO:0007669"/>
    <property type="project" value="TreeGrafter"/>
</dbReference>
<dbReference type="GO" id="GO:0043024">
    <property type="term" value="F:ribosomal small subunit binding"/>
    <property type="evidence" value="ECO:0007669"/>
    <property type="project" value="TreeGrafter"/>
</dbReference>
<dbReference type="GO" id="GO:0030490">
    <property type="term" value="P:maturation of SSU-rRNA"/>
    <property type="evidence" value="ECO:0007669"/>
    <property type="project" value="UniProtKB-UniRule"/>
</dbReference>
<dbReference type="Gene3D" id="3.30.300.20">
    <property type="match status" value="1"/>
</dbReference>
<dbReference type="HAMAP" id="MF_00003">
    <property type="entry name" value="RbfA"/>
    <property type="match status" value="1"/>
</dbReference>
<dbReference type="InterPro" id="IPR015946">
    <property type="entry name" value="KH_dom-like_a/b"/>
</dbReference>
<dbReference type="InterPro" id="IPR000238">
    <property type="entry name" value="RbfA"/>
</dbReference>
<dbReference type="InterPro" id="IPR023799">
    <property type="entry name" value="RbfA_dom_sf"/>
</dbReference>
<dbReference type="InterPro" id="IPR020053">
    <property type="entry name" value="Ribosome-bd_factorA_CS"/>
</dbReference>
<dbReference type="NCBIfam" id="TIGR00082">
    <property type="entry name" value="rbfA"/>
    <property type="match status" value="1"/>
</dbReference>
<dbReference type="PANTHER" id="PTHR33515">
    <property type="entry name" value="RIBOSOME-BINDING FACTOR A, CHLOROPLASTIC-RELATED"/>
    <property type="match status" value="1"/>
</dbReference>
<dbReference type="PANTHER" id="PTHR33515:SF1">
    <property type="entry name" value="RIBOSOME-BINDING FACTOR A, CHLOROPLASTIC-RELATED"/>
    <property type="match status" value="1"/>
</dbReference>
<dbReference type="Pfam" id="PF02033">
    <property type="entry name" value="RBFA"/>
    <property type="match status" value="1"/>
</dbReference>
<dbReference type="SUPFAM" id="SSF89919">
    <property type="entry name" value="Ribosome-binding factor A, RbfA"/>
    <property type="match status" value="1"/>
</dbReference>
<dbReference type="PROSITE" id="PS01319">
    <property type="entry name" value="RBFA"/>
    <property type="match status" value="1"/>
</dbReference>